<protein>
    <recommendedName>
        <fullName>Rhodopsin</fullName>
    </recommendedName>
</protein>
<gene>
    <name type="primary">rho</name>
</gene>
<dbReference type="EMBL" id="X62405">
    <property type="protein sequence ID" value="CAA44275.1"/>
    <property type="molecule type" value="mRNA"/>
</dbReference>
<dbReference type="PIR" id="S40688">
    <property type="entry name" value="S40688"/>
</dbReference>
<dbReference type="SMR" id="P35403"/>
<dbReference type="GlyCosmos" id="P35403">
    <property type="glycosylation" value="2 sites, No reported glycans"/>
</dbReference>
<dbReference type="GO" id="GO:0016020">
    <property type="term" value="C:membrane"/>
    <property type="evidence" value="ECO:0000250"/>
    <property type="project" value="UniProtKB"/>
</dbReference>
<dbReference type="GO" id="GO:0097381">
    <property type="term" value="C:photoreceptor disc membrane"/>
    <property type="evidence" value="ECO:0000250"/>
    <property type="project" value="UniProtKB"/>
</dbReference>
<dbReference type="GO" id="GO:0005886">
    <property type="term" value="C:plasma membrane"/>
    <property type="evidence" value="ECO:0000250"/>
    <property type="project" value="UniProtKB"/>
</dbReference>
<dbReference type="GO" id="GO:0005502">
    <property type="term" value="F:11-cis retinal binding"/>
    <property type="evidence" value="ECO:0000250"/>
    <property type="project" value="UniProtKB"/>
</dbReference>
<dbReference type="GO" id="GO:0008020">
    <property type="term" value="F:G protein-coupled photoreceptor activity"/>
    <property type="evidence" value="ECO:0000250"/>
    <property type="project" value="UniProtKB"/>
</dbReference>
<dbReference type="GO" id="GO:0016038">
    <property type="term" value="P:absorption of visible light"/>
    <property type="evidence" value="ECO:0000250"/>
    <property type="project" value="UniProtKB"/>
</dbReference>
<dbReference type="GO" id="GO:0016056">
    <property type="term" value="P:G protein-coupled opsin signaling pathway"/>
    <property type="evidence" value="ECO:0000250"/>
    <property type="project" value="UniProtKB"/>
</dbReference>
<dbReference type="GO" id="GO:0007601">
    <property type="term" value="P:visual perception"/>
    <property type="evidence" value="ECO:0007669"/>
    <property type="project" value="UniProtKB-KW"/>
</dbReference>
<dbReference type="FunFam" id="1.20.1070.10:FF:000018">
    <property type="entry name" value="Rhodopsin"/>
    <property type="match status" value="1"/>
</dbReference>
<dbReference type="Gene3D" id="1.20.1070.10">
    <property type="entry name" value="Rhodopsin 7-helix transmembrane proteins"/>
    <property type="match status" value="1"/>
</dbReference>
<dbReference type="InterPro" id="IPR050125">
    <property type="entry name" value="GPCR_opsins"/>
</dbReference>
<dbReference type="InterPro" id="IPR000276">
    <property type="entry name" value="GPCR_Rhodpsn"/>
</dbReference>
<dbReference type="InterPro" id="IPR017452">
    <property type="entry name" value="GPCR_Rhodpsn_7TM"/>
</dbReference>
<dbReference type="InterPro" id="IPR001760">
    <property type="entry name" value="Opsin"/>
</dbReference>
<dbReference type="InterPro" id="IPR027430">
    <property type="entry name" value="Retinal_BS"/>
</dbReference>
<dbReference type="InterPro" id="IPR000732">
    <property type="entry name" value="Rhodopsin"/>
</dbReference>
<dbReference type="InterPro" id="IPR019477">
    <property type="entry name" value="Rhodopsin_N"/>
</dbReference>
<dbReference type="PANTHER" id="PTHR24240">
    <property type="entry name" value="OPSIN"/>
    <property type="match status" value="1"/>
</dbReference>
<dbReference type="Pfam" id="PF00001">
    <property type="entry name" value="7tm_1"/>
    <property type="match status" value="1"/>
</dbReference>
<dbReference type="Pfam" id="PF10413">
    <property type="entry name" value="Rhodopsin_N"/>
    <property type="match status" value="1"/>
</dbReference>
<dbReference type="PRINTS" id="PR00237">
    <property type="entry name" value="GPCRRHODOPSN"/>
</dbReference>
<dbReference type="PRINTS" id="PR00238">
    <property type="entry name" value="OPSIN"/>
</dbReference>
<dbReference type="PRINTS" id="PR00579">
    <property type="entry name" value="RHODOPSIN"/>
</dbReference>
<dbReference type="SUPFAM" id="SSF81321">
    <property type="entry name" value="Family A G protein-coupled receptor-like"/>
    <property type="match status" value="1"/>
</dbReference>
<dbReference type="PROSITE" id="PS00237">
    <property type="entry name" value="G_PROTEIN_RECEP_F1_1"/>
    <property type="match status" value="1"/>
</dbReference>
<dbReference type="PROSITE" id="PS50262">
    <property type="entry name" value="G_PROTEIN_RECEP_F1_2"/>
    <property type="match status" value="1"/>
</dbReference>
<dbReference type="PROSITE" id="PS00238">
    <property type="entry name" value="OPSIN"/>
    <property type="match status" value="1"/>
</dbReference>
<accession>P35403</accession>
<keyword id="KW-0966">Cell projection</keyword>
<keyword id="KW-0157">Chromophore</keyword>
<keyword id="KW-1015">Disulfide bond</keyword>
<keyword id="KW-0297">G-protein coupled receptor</keyword>
<keyword id="KW-0325">Glycoprotein</keyword>
<keyword id="KW-0449">Lipoprotein</keyword>
<keyword id="KW-0472">Membrane</keyword>
<keyword id="KW-0564">Palmitate</keyword>
<keyword id="KW-0597">Phosphoprotein</keyword>
<keyword id="KW-0600">Photoreceptor protein</keyword>
<keyword id="KW-0675">Receptor</keyword>
<keyword id="KW-0681">Retinal protein</keyword>
<keyword id="KW-0716">Sensory transduction</keyword>
<keyword id="KW-0807">Transducer</keyword>
<keyword id="KW-0812">Transmembrane</keyword>
<keyword id="KW-1133">Transmembrane helix</keyword>
<keyword id="KW-0844">Vision</keyword>
<reference key="1">
    <citation type="journal article" date="1992" name="Proc. R. Soc. B">
        <title>Rod opsin cDNA sequence from the sand goby (Pomatoschistus minutus) compared with those of other vertebrates.</title>
        <authorList>
            <person name="Archer S.N."/>
            <person name="Lythgoe J.N."/>
            <person name="Hall L."/>
        </authorList>
    </citation>
    <scope>NUCLEOTIDE SEQUENCE [MRNA]</scope>
    <source>
        <tissue>Retina</tissue>
    </source>
</reference>
<sequence>MNGTEGPFFYIPMVNTTGIVRSPYEYPQYYLVNPAAYAALGAYMFFLILTGFPINFLTLYVTLEHKKLRTALNLILLNLAVADLFMVFGGFTTTMYTSMHGYFVLGRLGCNVEGFFATLGGEIALWSLVVLAVERWVVVCKPISNFRFTENHAIMGVAFSWIMAATCAVPPLVGWSRYIPEGMQCSCGVDYYTRAEGFNNESFVIYMFIVHFLAPLIVIFFCYGRLLCAVKEAAAAQQESETTQRAEREVTRMVIIMVIGFLTSWLPYASVAWYIFTHQGTEFGPLFMTIPAFFAKSSALYNPMIYICMNKQFRHCMITTLCCGKNPFEEEEGASTTKTEASSVSSSSVSPA</sequence>
<comment type="function">
    <text evidence="1 2 3">Photoreceptor required for image-forming vision at low light intensity. While most salt water fish species use retinal as chromophore, most freshwater fish use 3-dehydroretinal, or a mixture of retinal and 3-dehydroretinal (By similarity). Light-induced isomerization of 11-cis to all-trans retinal triggers a conformational change that activates signaling via G-proteins. Subsequent receptor phosphorylation mediates displacement of the bound G-protein alpha subunit by arrestin and terminates signaling (By similarity).</text>
</comment>
<comment type="subcellular location">
    <subcellularLocation>
        <location evidence="2">Membrane</location>
        <topology evidence="2">Multi-pass membrane protein</topology>
    </subcellularLocation>
    <subcellularLocation>
        <location evidence="4">Cell projection</location>
        <location evidence="4">Cilium</location>
        <location evidence="4">Photoreceptor outer segment</location>
    </subcellularLocation>
    <text evidence="2">Synthesized in the inner segment (IS) of rod photoreceptor cells before vectorial transport to disk membranes in the rod outer segment (OS) photosensory cilia.</text>
</comment>
<comment type="PTM">
    <text evidence="1">Phosphorylated on some or all of the serine and threonine residues present in the C-terminal region.</text>
</comment>
<comment type="PTM">
    <text evidence="1">Contains one covalently linked retinal chromophore.</text>
</comment>
<comment type="similarity">
    <text evidence="6">Belongs to the G-protein coupled receptor 1 family. Opsin subfamily.</text>
</comment>
<evidence type="ECO:0000250" key="1">
    <source>
        <dbReference type="UniProtKB" id="P02699"/>
    </source>
</evidence>
<evidence type="ECO:0000250" key="2">
    <source>
        <dbReference type="UniProtKB" id="P08100"/>
    </source>
</evidence>
<evidence type="ECO:0000250" key="3">
    <source>
        <dbReference type="UniProtKB" id="P32309"/>
    </source>
</evidence>
<evidence type="ECO:0000250" key="4">
    <source>
        <dbReference type="UniProtKB" id="P35359"/>
    </source>
</evidence>
<evidence type="ECO:0000255" key="5"/>
<evidence type="ECO:0000255" key="6">
    <source>
        <dbReference type="PROSITE-ProRule" id="PRU00521"/>
    </source>
</evidence>
<evidence type="ECO:0000256" key="7">
    <source>
        <dbReference type="SAM" id="MobiDB-lite"/>
    </source>
</evidence>
<proteinExistence type="evidence at transcript level"/>
<name>OPSD_POMMI</name>
<feature type="chain" id="PRO_0000197701" description="Rhodopsin">
    <location>
        <begin position="1"/>
        <end position="352"/>
    </location>
</feature>
<feature type="topological domain" description="Extracellular" evidence="1">
    <location>
        <begin position="1"/>
        <end position="36"/>
    </location>
</feature>
<feature type="transmembrane region" description="Helical; Name=1" evidence="1">
    <location>
        <begin position="37"/>
        <end position="61"/>
    </location>
</feature>
<feature type="topological domain" description="Cytoplasmic" evidence="1">
    <location>
        <begin position="62"/>
        <end position="73"/>
    </location>
</feature>
<feature type="transmembrane region" description="Helical; Name=2" evidence="1">
    <location>
        <begin position="74"/>
        <end position="96"/>
    </location>
</feature>
<feature type="topological domain" description="Extracellular" evidence="1">
    <location>
        <begin position="97"/>
        <end position="110"/>
    </location>
</feature>
<feature type="transmembrane region" description="Helical; Name=3" evidence="1">
    <location>
        <begin position="111"/>
        <end position="133"/>
    </location>
</feature>
<feature type="topological domain" description="Cytoplasmic" evidence="1">
    <location>
        <begin position="134"/>
        <end position="152"/>
    </location>
</feature>
<feature type="transmembrane region" description="Helical; Name=4" evidence="1">
    <location>
        <begin position="153"/>
        <end position="173"/>
    </location>
</feature>
<feature type="topological domain" description="Extracellular" evidence="1">
    <location>
        <begin position="174"/>
        <end position="202"/>
    </location>
</feature>
<feature type="transmembrane region" description="Helical; Name=5" evidence="1">
    <location>
        <begin position="203"/>
        <end position="224"/>
    </location>
</feature>
<feature type="topological domain" description="Cytoplasmic" evidence="1">
    <location>
        <begin position="225"/>
        <end position="252"/>
    </location>
</feature>
<feature type="transmembrane region" description="Helical; Name=6" evidence="1">
    <location>
        <begin position="253"/>
        <end position="274"/>
    </location>
</feature>
<feature type="topological domain" description="Extracellular" evidence="1">
    <location>
        <begin position="275"/>
        <end position="286"/>
    </location>
</feature>
<feature type="transmembrane region" description="Helical; Name=7" evidence="1">
    <location>
        <begin position="287"/>
        <end position="308"/>
    </location>
</feature>
<feature type="topological domain" description="Cytoplasmic" evidence="1">
    <location>
        <begin position="309"/>
        <end position="352"/>
    </location>
</feature>
<feature type="region of interest" description="Disordered" evidence="7">
    <location>
        <begin position="331"/>
        <end position="352"/>
    </location>
</feature>
<feature type="short sequence motif" description="'Ionic lock' involved in activated form stabilization" evidence="1">
    <location>
        <begin position="134"/>
        <end position="136"/>
    </location>
</feature>
<feature type="compositionally biased region" description="Low complexity" evidence="7">
    <location>
        <begin position="342"/>
        <end position="352"/>
    </location>
</feature>
<feature type="site" description="Plays an important role in the conformation switch to the active conformation" evidence="1">
    <location>
        <position position="113"/>
    </location>
</feature>
<feature type="modified residue" description="N6-(retinylidene)lysine" evidence="1">
    <location>
        <position position="296"/>
    </location>
</feature>
<feature type="lipid moiety-binding region" description="S-palmitoyl cysteine" evidence="1">
    <location>
        <position position="322"/>
    </location>
</feature>
<feature type="lipid moiety-binding region" description="S-palmitoyl cysteine" evidence="1">
    <location>
        <position position="323"/>
    </location>
</feature>
<feature type="glycosylation site" description="N-linked (GlcNAc...) asparagine" evidence="5">
    <location>
        <position position="2"/>
    </location>
</feature>
<feature type="glycosylation site" description="N-linked (GlcNAc...) asparagine" evidence="5">
    <location>
        <position position="15"/>
    </location>
</feature>
<feature type="disulfide bond" evidence="6">
    <location>
        <begin position="110"/>
        <end position="187"/>
    </location>
</feature>
<organism>
    <name type="scientific">Pomatoschistus minutus</name>
    <name type="common">Sand goby</name>
    <name type="synonym">Gobius minutus</name>
    <dbReference type="NCBI Taxonomy" id="13225"/>
    <lineage>
        <taxon>Eukaryota</taxon>
        <taxon>Metazoa</taxon>
        <taxon>Chordata</taxon>
        <taxon>Craniata</taxon>
        <taxon>Vertebrata</taxon>
        <taxon>Euteleostomi</taxon>
        <taxon>Actinopterygii</taxon>
        <taxon>Neopterygii</taxon>
        <taxon>Teleostei</taxon>
        <taxon>Neoteleostei</taxon>
        <taxon>Acanthomorphata</taxon>
        <taxon>Gobiaria</taxon>
        <taxon>Gobiiformes</taxon>
        <taxon>Gobioidei</taxon>
        <taxon>Gobiidae</taxon>
        <taxon>Gobiinae</taxon>
        <taxon>Pomatoschistus</taxon>
    </lineage>
</organism>